<name>NDUB6_BOVIN</name>
<protein>
    <recommendedName>
        <fullName>NADH dehydrogenase [ubiquinone] 1 beta subcomplex subunit 6</fullName>
    </recommendedName>
    <alternativeName>
        <fullName>Complex I-B17</fullName>
        <shortName>CI-B17</shortName>
    </alternativeName>
    <alternativeName>
        <fullName>NADH-ubiquinone oxidoreductase B17 subunit</fullName>
    </alternativeName>
</protein>
<dbReference type="EMBL" id="X63212">
    <property type="protein sequence ID" value="CAA44897.1"/>
    <property type="molecule type" value="mRNA"/>
</dbReference>
<dbReference type="EMBL" id="BC102533">
    <property type="protein sequence ID" value="AAI02534.1"/>
    <property type="molecule type" value="mRNA"/>
</dbReference>
<dbReference type="PIR" id="S28246">
    <property type="entry name" value="S28246"/>
</dbReference>
<dbReference type="RefSeq" id="NP_786981.1">
    <property type="nucleotide sequence ID" value="NM_175787.2"/>
</dbReference>
<dbReference type="PDB" id="5LC5">
    <property type="method" value="EM"/>
    <property type="resolution" value="4.35 A"/>
    <property type="chains" value="i=1-33"/>
</dbReference>
<dbReference type="PDB" id="5LDW">
    <property type="method" value="EM"/>
    <property type="resolution" value="4.27 A"/>
    <property type="chains" value="i=7-33"/>
</dbReference>
<dbReference type="PDB" id="5LDX">
    <property type="method" value="EM"/>
    <property type="resolution" value="5.60 A"/>
    <property type="chains" value="i=7-33"/>
</dbReference>
<dbReference type="PDB" id="5O31">
    <property type="method" value="EM"/>
    <property type="resolution" value="4.13 A"/>
    <property type="chains" value="i=2-33"/>
</dbReference>
<dbReference type="PDB" id="7DGQ">
    <property type="method" value="EM"/>
    <property type="resolution" value="5.00 A"/>
    <property type="chains" value="c=1-128"/>
</dbReference>
<dbReference type="PDB" id="7DGR">
    <property type="method" value="EM"/>
    <property type="resolution" value="4.60 A"/>
    <property type="chains" value="c=1-128"/>
</dbReference>
<dbReference type="PDB" id="7DGS">
    <property type="method" value="EM"/>
    <property type="resolution" value="7.80 A"/>
    <property type="chains" value="c=2-128"/>
</dbReference>
<dbReference type="PDB" id="7DGZ">
    <property type="method" value="EM"/>
    <property type="resolution" value="3.80 A"/>
    <property type="chains" value="c=2-128"/>
</dbReference>
<dbReference type="PDB" id="7DH0">
    <property type="method" value="EM"/>
    <property type="resolution" value="4.20 A"/>
    <property type="chains" value="c=2-128"/>
</dbReference>
<dbReference type="PDB" id="7DKF">
    <property type="method" value="EM"/>
    <property type="resolution" value="8.30 A"/>
    <property type="chains" value="c2=2-128"/>
</dbReference>
<dbReference type="PDB" id="7QSD">
    <property type="method" value="EM"/>
    <property type="resolution" value="3.10 A"/>
    <property type="chains" value="i=2-128"/>
</dbReference>
<dbReference type="PDB" id="7QSK">
    <property type="method" value="EM"/>
    <property type="resolution" value="2.84 A"/>
    <property type="chains" value="i=2-128"/>
</dbReference>
<dbReference type="PDB" id="7QSL">
    <property type="method" value="EM"/>
    <property type="resolution" value="2.76 A"/>
    <property type="chains" value="i=2-128"/>
</dbReference>
<dbReference type="PDB" id="7QSM">
    <property type="method" value="EM"/>
    <property type="resolution" value="2.30 A"/>
    <property type="chains" value="i=2-128"/>
</dbReference>
<dbReference type="PDB" id="7QSN">
    <property type="method" value="EM"/>
    <property type="resolution" value="2.81 A"/>
    <property type="chains" value="i=2-128"/>
</dbReference>
<dbReference type="PDB" id="7QSO">
    <property type="method" value="EM"/>
    <property type="resolution" value="3.02 A"/>
    <property type="chains" value="i=2-128"/>
</dbReference>
<dbReference type="PDB" id="7R41">
    <property type="method" value="EM"/>
    <property type="resolution" value="2.30 A"/>
    <property type="chains" value="i=2-128"/>
</dbReference>
<dbReference type="PDB" id="7R42">
    <property type="method" value="EM"/>
    <property type="resolution" value="2.30 A"/>
    <property type="chains" value="i=2-128"/>
</dbReference>
<dbReference type="PDB" id="7R43">
    <property type="method" value="EM"/>
    <property type="resolution" value="2.40 A"/>
    <property type="chains" value="i=2-128"/>
</dbReference>
<dbReference type="PDB" id="7R44">
    <property type="method" value="EM"/>
    <property type="resolution" value="2.40 A"/>
    <property type="chains" value="i=2-128"/>
</dbReference>
<dbReference type="PDB" id="7R45">
    <property type="method" value="EM"/>
    <property type="resolution" value="2.40 A"/>
    <property type="chains" value="i=2-128"/>
</dbReference>
<dbReference type="PDB" id="7R46">
    <property type="method" value="EM"/>
    <property type="resolution" value="2.40 A"/>
    <property type="chains" value="i=2-128"/>
</dbReference>
<dbReference type="PDB" id="7R47">
    <property type="method" value="EM"/>
    <property type="resolution" value="2.30 A"/>
    <property type="chains" value="i=2-128"/>
</dbReference>
<dbReference type="PDB" id="7R48">
    <property type="method" value="EM"/>
    <property type="resolution" value="2.30 A"/>
    <property type="chains" value="i=2-128"/>
</dbReference>
<dbReference type="PDB" id="7R4C">
    <property type="method" value="EM"/>
    <property type="resolution" value="2.30 A"/>
    <property type="chains" value="i=2-128"/>
</dbReference>
<dbReference type="PDB" id="7R4D">
    <property type="method" value="EM"/>
    <property type="resolution" value="2.30 A"/>
    <property type="chains" value="i=2-128"/>
</dbReference>
<dbReference type="PDB" id="7R4F">
    <property type="method" value="EM"/>
    <property type="resolution" value="2.40 A"/>
    <property type="chains" value="i=2-128"/>
</dbReference>
<dbReference type="PDB" id="7R4G">
    <property type="method" value="EM"/>
    <property type="resolution" value="2.50 A"/>
    <property type="chains" value="i=2-128"/>
</dbReference>
<dbReference type="PDB" id="8Q0A">
    <property type="method" value="EM"/>
    <property type="resolution" value="3.10 A"/>
    <property type="chains" value="i=1-128"/>
</dbReference>
<dbReference type="PDB" id="8Q0F">
    <property type="method" value="EM"/>
    <property type="resolution" value="3.10 A"/>
    <property type="chains" value="i=1-128"/>
</dbReference>
<dbReference type="PDB" id="8Q0J">
    <property type="method" value="EM"/>
    <property type="resolution" value="3.80 A"/>
    <property type="chains" value="i=1-128"/>
</dbReference>
<dbReference type="PDB" id="8Q0M">
    <property type="method" value="EM"/>
    <property type="resolution" value="3.10 A"/>
    <property type="chains" value="i=1-128"/>
</dbReference>
<dbReference type="PDB" id="8Q0O">
    <property type="method" value="EM"/>
    <property type="resolution" value="3.10 A"/>
    <property type="chains" value="i=1-128"/>
</dbReference>
<dbReference type="PDB" id="8Q0Q">
    <property type="method" value="EM"/>
    <property type="resolution" value="3.60 A"/>
    <property type="chains" value="i=1-128"/>
</dbReference>
<dbReference type="PDB" id="8Q1P">
    <property type="method" value="EM"/>
    <property type="resolution" value="2.90 A"/>
    <property type="chains" value="i=1-128"/>
</dbReference>
<dbReference type="PDB" id="8Q1U">
    <property type="method" value="EM"/>
    <property type="resolution" value="3.30 A"/>
    <property type="chains" value="i=1-128"/>
</dbReference>
<dbReference type="PDB" id="8Q1Y">
    <property type="method" value="EM"/>
    <property type="resolution" value="2.60 A"/>
    <property type="chains" value="i=1-128"/>
</dbReference>
<dbReference type="PDB" id="8Q25">
    <property type="method" value="EM"/>
    <property type="resolution" value="2.80 A"/>
    <property type="chains" value="i=1-128"/>
</dbReference>
<dbReference type="PDB" id="8Q45">
    <property type="method" value="EM"/>
    <property type="resolution" value="2.70 A"/>
    <property type="chains" value="i=1-128"/>
</dbReference>
<dbReference type="PDB" id="8Q46">
    <property type="method" value="EM"/>
    <property type="resolution" value="2.60 A"/>
    <property type="chains" value="i=1-128"/>
</dbReference>
<dbReference type="PDB" id="8Q47">
    <property type="method" value="EM"/>
    <property type="resolution" value="2.90 A"/>
    <property type="chains" value="i=1-128"/>
</dbReference>
<dbReference type="PDB" id="8Q48">
    <property type="method" value="EM"/>
    <property type="resolution" value="2.50 A"/>
    <property type="chains" value="i=1-128"/>
</dbReference>
<dbReference type="PDB" id="8Q49">
    <property type="method" value="EM"/>
    <property type="resolution" value="2.60 A"/>
    <property type="chains" value="i=1-128"/>
</dbReference>
<dbReference type="PDB" id="8Q4A">
    <property type="method" value="EM"/>
    <property type="resolution" value="2.60 A"/>
    <property type="chains" value="i=1-128"/>
</dbReference>
<dbReference type="PDBsum" id="5LC5"/>
<dbReference type="PDBsum" id="5LDW"/>
<dbReference type="PDBsum" id="5LDX"/>
<dbReference type="PDBsum" id="5O31"/>
<dbReference type="PDBsum" id="7DGQ"/>
<dbReference type="PDBsum" id="7DGR"/>
<dbReference type="PDBsum" id="7DGS"/>
<dbReference type="PDBsum" id="7DGZ"/>
<dbReference type="PDBsum" id="7DH0"/>
<dbReference type="PDBsum" id="7DKF"/>
<dbReference type="PDBsum" id="7QSD"/>
<dbReference type="PDBsum" id="7QSK"/>
<dbReference type="PDBsum" id="7QSL"/>
<dbReference type="PDBsum" id="7QSM"/>
<dbReference type="PDBsum" id="7QSN"/>
<dbReference type="PDBsum" id="7QSO"/>
<dbReference type="PDBsum" id="7R41"/>
<dbReference type="PDBsum" id="7R42"/>
<dbReference type="PDBsum" id="7R43"/>
<dbReference type="PDBsum" id="7R44"/>
<dbReference type="PDBsum" id="7R45"/>
<dbReference type="PDBsum" id="7R46"/>
<dbReference type="PDBsum" id="7R47"/>
<dbReference type="PDBsum" id="7R48"/>
<dbReference type="PDBsum" id="7R4C"/>
<dbReference type="PDBsum" id="7R4D"/>
<dbReference type="PDBsum" id="7R4F"/>
<dbReference type="PDBsum" id="7R4G"/>
<dbReference type="PDBsum" id="8Q0A"/>
<dbReference type="PDBsum" id="8Q0F"/>
<dbReference type="PDBsum" id="8Q0J"/>
<dbReference type="PDBsum" id="8Q0M"/>
<dbReference type="PDBsum" id="8Q0O"/>
<dbReference type="PDBsum" id="8Q0Q"/>
<dbReference type="PDBsum" id="8Q1P"/>
<dbReference type="PDBsum" id="8Q1U"/>
<dbReference type="PDBsum" id="8Q1Y"/>
<dbReference type="PDBsum" id="8Q25"/>
<dbReference type="PDBsum" id="8Q45"/>
<dbReference type="PDBsum" id="8Q46"/>
<dbReference type="PDBsum" id="8Q47"/>
<dbReference type="PDBsum" id="8Q48"/>
<dbReference type="PDBsum" id="8Q49"/>
<dbReference type="PDBsum" id="8Q4A"/>
<dbReference type="EMDB" id="EMD-14127"/>
<dbReference type="EMDB" id="EMD-14132"/>
<dbReference type="EMDB" id="EMD-14133"/>
<dbReference type="EMDB" id="EMD-14134"/>
<dbReference type="EMDB" id="EMD-14139"/>
<dbReference type="EMDB" id="EMD-14140"/>
<dbReference type="EMDB" id="EMD-14251"/>
<dbReference type="EMDB" id="EMD-14256"/>
<dbReference type="EMDB" id="EMD-14261"/>
<dbReference type="EMDB" id="EMD-14266"/>
<dbReference type="EMDB" id="EMD-14272"/>
<dbReference type="EMDB" id="EMD-14277"/>
<dbReference type="EMDB" id="EMD-14282"/>
<dbReference type="EMDB" id="EMD-14287"/>
<dbReference type="EMDB" id="EMD-14292"/>
<dbReference type="EMDB" id="EMD-14297"/>
<dbReference type="EMDB" id="EMD-14302"/>
<dbReference type="EMDB" id="EMD-14307"/>
<dbReference type="EMDB" id="EMD-18051"/>
<dbReference type="EMDB" id="EMD-18052"/>
<dbReference type="EMDB" id="EMD-18054"/>
<dbReference type="EMDB" id="EMD-18055"/>
<dbReference type="EMDB" id="EMD-18057"/>
<dbReference type="EMDB" id="EMD-18059"/>
<dbReference type="EMDB" id="EMD-18066"/>
<dbReference type="EMDB" id="EMD-18067"/>
<dbReference type="EMDB" id="EMD-18068"/>
<dbReference type="EMDB" id="EMD-18069"/>
<dbReference type="EMDB" id="EMD-18138"/>
<dbReference type="EMDB" id="EMD-18139"/>
<dbReference type="EMDB" id="EMD-18140"/>
<dbReference type="EMDB" id="EMD-18141"/>
<dbReference type="EMDB" id="EMD-18142"/>
<dbReference type="EMDB" id="EMD-18143"/>
<dbReference type="EMDB" id="EMD-30673"/>
<dbReference type="EMDB" id="EMD-30674"/>
<dbReference type="EMDB" id="EMD-30675"/>
<dbReference type="EMDB" id="EMD-30676"/>
<dbReference type="EMDB" id="EMD-30677"/>
<dbReference type="EMDB" id="EMD-30706"/>
<dbReference type="EMDB" id="EMD-3731"/>
<dbReference type="EMDB" id="EMD-4032"/>
<dbReference type="EMDB" id="EMD-4040"/>
<dbReference type="EMDB" id="EMD-4041"/>
<dbReference type="SMR" id="Q02367"/>
<dbReference type="CORUM" id="Q02367"/>
<dbReference type="DIP" id="DIP-38833N"/>
<dbReference type="FunCoup" id="Q02367">
    <property type="interactions" value="1153"/>
</dbReference>
<dbReference type="IntAct" id="Q02367">
    <property type="interactions" value="2"/>
</dbReference>
<dbReference type="STRING" id="9913.ENSBTAP00000007761"/>
<dbReference type="TCDB" id="3.D.1.6.1">
    <property type="family name" value="the h+ or na+-translocating nadh dehydrogenase (ndh) family"/>
</dbReference>
<dbReference type="iPTMnet" id="Q02367"/>
<dbReference type="PaxDb" id="9913-ENSBTAP00000007761"/>
<dbReference type="PeptideAtlas" id="Q02367"/>
<dbReference type="GeneID" id="327665"/>
<dbReference type="KEGG" id="bta:327665"/>
<dbReference type="CTD" id="4712"/>
<dbReference type="VEuPathDB" id="HostDB:ENSBTAG00000005907"/>
<dbReference type="eggNOG" id="KOG4633">
    <property type="taxonomic scope" value="Eukaryota"/>
</dbReference>
<dbReference type="HOGENOM" id="CLU_171928_0_0_1"/>
<dbReference type="InParanoid" id="Q02367"/>
<dbReference type="OMA" id="KYHVNTK"/>
<dbReference type="OrthoDB" id="5824032at2759"/>
<dbReference type="TreeFam" id="TF328587"/>
<dbReference type="Reactome" id="R-BTA-611105">
    <property type="pathway name" value="Respiratory electron transport"/>
</dbReference>
<dbReference type="Reactome" id="R-BTA-6799198">
    <property type="pathway name" value="Complex I biogenesis"/>
</dbReference>
<dbReference type="Proteomes" id="UP000009136">
    <property type="component" value="Chromosome 8"/>
</dbReference>
<dbReference type="Bgee" id="ENSBTAG00000005907">
    <property type="expression patterns" value="Expressed in tongue muscle and 109 other cell types or tissues"/>
</dbReference>
<dbReference type="GO" id="GO:0005743">
    <property type="term" value="C:mitochondrial inner membrane"/>
    <property type="evidence" value="ECO:0007669"/>
    <property type="project" value="UniProtKB-SubCell"/>
</dbReference>
<dbReference type="GO" id="GO:0005739">
    <property type="term" value="C:mitochondrion"/>
    <property type="evidence" value="ECO:0000305"/>
    <property type="project" value="UniProtKB"/>
</dbReference>
<dbReference type="GO" id="GO:0045271">
    <property type="term" value="C:respiratory chain complex I"/>
    <property type="evidence" value="ECO:0000314"/>
    <property type="project" value="UniProtKB"/>
</dbReference>
<dbReference type="GO" id="GO:0042775">
    <property type="term" value="P:mitochondrial ATP synthesis coupled electron transport"/>
    <property type="evidence" value="ECO:0000318"/>
    <property type="project" value="GO_Central"/>
</dbReference>
<dbReference type="GO" id="GO:0006120">
    <property type="term" value="P:mitochondrial electron transport, NADH to ubiquinone"/>
    <property type="evidence" value="ECO:0007669"/>
    <property type="project" value="InterPro"/>
</dbReference>
<dbReference type="InterPro" id="IPR019174">
    <property type="entry name" value="NADH_DH_b-subcmplx_su6"/>
</dbReference>
<dbReference type="PANTHER" id="PTHR15083">
    <property type="entry name" value="NADH DEHYDROGENASE [UBIQUINONE] 1 BETA SUBCOMPLEX SUBUNIT 6"/>
    <property type="match status" value="1"/>
</dbReference>
<dbReference type="PANTHER" id="PTHR15083:SF0">
    <property type="entry name" value="NADH DEHYDROGENASE [UBIQUINONE] 1 BETA SUBCOMPLEX SUBUNIT 6"/>
    <property type="match status" value="1"/>
</dbReference>
<dbReference type="Pfam" id="PF09782">
    <property type="entry name" value="NDUF_B6"/>
    <property type="match status" value="1"/>
</dbReference>
<organism>
    <name type="scientific">Bos taurus</name>
    <name type="common">Bovine</name>
    <dbReference type="NCBI Taxonomy" id="9913"/>
    <lineage>
        <taxon>Eukaryota</taxon>
        <taxon>Metazoa</taxon>
        <taxon>Chordata</taxon>
        <taxon>Craniata</taxon>
        <taxon>Vertebrata</taxon>
        <taxon>Euteleostomi</taxon>
        <taxon>Mammalia</taxon>
        <taxon>Eutheria</taxon>
        <taxon>Laurasiatheria</taxon>
        <taxon>Artiodactyla</taxon>
        <taxon>Ruminantia</taxon>
        <taxon>Pecora</taxon>
        <taxon>Bovidae</taxon>
        <taxon>Bovinae</taxon>
        <taxon>Bos</taxon>
    </lineage>
</organism>
<proteinExistence type="evidence at protein level"/>
<feature type="initiator methionine" description="Removed">
    <location>
        <position position="1"/>
    </location>
</feature>
<feature type="chain" id="PRO_0000118806" description="NADH dehydrogenase [ubiquinone] 1 beta subcomplex subunit 6">
    <location>
        <begin position="2"/>
        <end position="128"/>
    </location>
</feature>
<feature type="transmembrane region" description="Helical" evidence="3">
    <location>
        <begin position="64"/>
        <end position="86"/>
    </location>
</feature>
<feature type="modified residue" description="N-acetylserine" evidence="5">
    <location>
        <position position="2"/>
    </location>
</feature>
<feature type="modified residue" description="N6-acetyllysine" evidence="2">
    <location>
        <position position="24"/>
    </location>
</feature>
<feature type="helix" evidence="10">
    <location>
        <begin position="6"/>
        <end position="24"/>
    </location>
</feature>
<feature type="helix" evidence="10">
    <location>
        <begin position="42"/>
        <end position="52"/>
    </location>
</feature>
<feature type="strand" evidence="10">
    <location>
        <begin position="56"/>
        <end position="58"/>
    </location>
</feature>
<feature type="helix" evidence="10">
    <location>
        <begin position="61"/>
        <end position="74"/>
    </location>
</feature>
<feature type="helix" evidence="10">
    <location>
        <begin position="76"/>
        <end position="88"/>
    </location>
</feature>
<feature type="turn" evidence="10">
    <location>
        <begin position="89"/>
        <end position="92"/>
    </location>
</feature>
<feature type="strand" evidence="10">
    <location>
        <begin position="96"/>
        <end position="99"/>
    </location>
</feature>
<feature type="turn" evidence="10">
    <location>
        <begin position="111"/>
        <end position="113"/>
    </location>
</feature>
<evidence type="ECO:0000250" key="1">
    <source>
        <dbReference type="UniProtKB" id="O95139"/>
    </source>
</evidence>
<evidence type="ECO:0000250" key="2">
    <source>
        <dbReference type="UniProtKB" id="Q3UIU2"/>
    </source>
</evidence>
<evidence type="ECO:0000255" key="3"/>
<evidence type="ECO:0000269" key="4">
    <source>
    </source>
</evidence>
<evidence type="ECO:0000269" key="5">
    <source>
    </source>
</evidence>
<evidence type="ECO:0000269" key="6">
    <source>
    </source>
</evidence>
<evidence type="ECO:0000305" key="7"/>
<evidence type="ECO:0000305" key="8">
    <source>
    </source>
</evidence>
<evidence type="ECO:0000305" key="9">
    <source>
    </source>
</evidence>
<evidence type="ECO:0007829" key="10">
    <source>
        <dbReference type="PDB" id="7QSM"/>
    </source>
</evidence>
<gene>
    <name type="primary">NDUFB6</name>
</gene>
<accession>Q02367</accession>
<accession>Q3T079</accession>
<sequence length="128" mass="15524">MSGYTPEEKLRLQQLRELRRRWLKDQELSPREPVLPPQRVSPVERFWNKFLQDGALWKNVIYKTYRHSIFAFTHVLIPVWIIHYYLKYHVTTKPYTIVEKKPRIFPGDTILETGEVIPPMKEFPDQHH</sequence>
<comment type="function">
    <text evidence="1">Accessory subunit of the mitochondrial membrane respiratory chain NADH dehydrogenase (Complex I), that is believed not to be involved in catalysis. Complex I functions in the transfer of electrons from NADH to the respiratory chain. The immediate electron acceptor for the enzyme is believed to be ubiquinone.</text>
</comment>
<comment type="subunit">
    <text evidence="4 5 6">Complex I is composed of 45 different subunits.</text>
</comment>
<comment type="subcellular location">
    <subcellularLocation>
        <location evidence="8 9">Mitochondrion inner membrane</location>
        <topology evidence="3">Single-pass membrane protein</topology>
        <orientation evidence="7">Matrix side</orientation>
    </subcellularLocation>
</comment>
<comment type="similarity">
    <text evidence="7">Belongs to the complex I NDUFB6 subunit family.</text>
</comment>
<keyword id="KW-0002">3D-structure</keyword>
<keyword id="KW-0007">Acetylation</keyword>
<keyword id="KW-0903">Direct protein sequencing</keyword>
<keyword id="KW-0249">Electron transport</keyword>
<keyword id="KW-0472">Membrane</keyword>
<keyword id="KW-0496">Mitochondrion</keyword>
<keyword id="KW-0999">Mitochondrion inner membrane</keyword>
<keyword id="KW-1185">Reference proteome</keyword>
<keyword id="KW-0679">Respiratory chain</keyword>
<keyword id="KW-0812">Transmembrane</keyword>
<keyword id="KW-1133">Transmembrane helix</keyword>
<keyword id="KW-0813">Transport</keyword>
<reference key="1">
    <citation type="journal article" date="1992" name="J. Mol. Biol.">
        <title>Sequences of 20 subunits of NADH:ubiquinone oxidoreductase from bovine heart mitochondria. Application of a novel strategy for sequencing proteins using the polymerase chain reaction.</title>
        <authorList>
            <person name="Walker J.E."/>
            <person name="Arizmendi J.M."/>
            <person name="Dupuis A."/>
            <person name="Fearnley I.M."/>
            <person name="Finel M."/>
            <person name="Medd S.M."/>
            <person name="Pilkington S.J."/>
            <person name="Runswick M.J."/>
            <person name="Skehel J.M."/>
        </authorList>
    </citation>
    <scope>NUCLEOTIDE SEQUENCE [MRNA]</scope>
    <scope>PARTIAL PROTEIN SEQUENCE</scope>
    <scope>ACETYLATION AT SER-2</scope>
    <source>
        <tissue>Heart</tissue>
    </source>
</reference>
<reference key="2">
    <citation type="submission" date="2005-08" db="EMBL/GenBank/DDBJ databases">
        <authorList>
            <consortium name="NIH - Mammalian Gene Collection (MGC) project"/>
        </authorList>
    </citation>
    <scope>NUCLEOTIDE SEQUENCE [LARGE SCALE MRNA]</scope>
    <source>
        <strain>Crossbred X Angus</strain>
        <tissue>Liver</tissue>
    </source>
</reference>
<reference key="3">
    <citation type="journal article" date="2000" name="Biochemistry">
        <title>Resolution of the membrane domain of bovine complex I into subcomplexes: implications for the structural organization of the enzyme.</title>
        <authorList>
            <person name="Sazanov L.A."/>
            <person name="Peak-Chew S.Y."/>
            <person name="Fearnley I.M."/>
            <person name="Walker J.E."/>
        </authorList>
    </citation>
    <scope>PARTIAL PROTEIN SEQUENCE</scope>
    <scope>SUBUNIT</scope>
    <scope>IDENTIFICATION IN COMPLEX I</scope>
    <scope>SUBCELLULAR LOCATION</scope>
</reference>
<reference key="4">
    <citation type="journal article" date="2008" name="Anal. Biochem.">
        <title>Subunit analysis of bovine heart complex I by reversed-phase high-performance liquid chromatography, electrospray ionization-tandem mass spectrometry, and matrix-assisted laser desorption/ionization-time-of-flight mass spectrometry.</title>
        <authorList>
            <person name="Lemma-Gray P."/>
            <person name="Valusova E."/>
            <person name="Carroll C.A."/>
            <person name="Weintraub S.T."/>
            <person name="Musatov A."/>
            <person name="Robinson N.C."/>
        </authorList>
    </citation>
    <scope>SUBUNIT</scope>
    <scope>IDENTIFICATION IN COMPLEX I</scope>
    <scope>SUBCELLULAR LOCATION</scope>
</reference>